<evidence type="ECO:0000250" key="1">
    <source>
        <dbReference type="UniProtKB" id="Q9NZZ3"/>
    </source>
</evidence>
<evidence type="ECO:0000255" key="2"/>
<evidence type="ECO:0000256" key="3">
    <source>
        <dbReference type="SAM" id="MobiDB-lite"/>
    </source>
</evidence>
<evidence type="ECO:0000305" key="4"/>
<reference key="1">
    <citation type="submission" date="2004-11" db="EMBL/GenBank/DDBJ databases">
        <authorList>
            <consortium name="The German cDNA consortium"/>
        </authorList>
    </citation>
    <scope>NUCLEOTIDE SEQUENCE [LARGE SCALE MRNA]</scope>
    <source>
        <tissue>Kidney</tissue>
    </source>
</reference>
<proteinExistence type="evidence at transcript level"/>
<feature type="chain" id="PRO_0000211502" description="Charged multivesicular body protein 5">
    <location>
        <begin position="1"/>
        <end position="219"/>
    </location>
</feature>
<feature type="region of interest" description="Disordered" evidence="3">
    <location>
        <begin position="1"/>
        <end position="21"/>
    </location>
</feature>
<feature type="region of interest" description="Disordered" evidence="3">
    <location>
        <begin position="188"/>
        <end position="219"/>
    </location>
</feature>
<feature type="coiled-coil region" evidence="2">
    <location>
        <begin position="26"/>
        <end position="179"/>
    </location>
</feature>
<feature type="compositionally biased region" description="Basic residues" evidence="3">
    <location>
        <begin position="1"/>
        <end position="10"/>
    </location>
</feature>
<feature type="modified residue" description="Phosphoserine" evidence="1">
    <location>
        <position position="86"/>
    </location>
</feature>
<accession>Q5RBR3</accession>
<dbReference type="EMBL" id="CR858575">
    <property type="protein sequence ID" value="CAH90797.1"/>
    <property type="molecule type" value="mRNA"/>
</dbReference>
<dbReference type="RefSeq" id="NP_001125453.1">
    <property type="nucleotide sequence ID" value="NM_001131981.1"/>
</dbReference>
<dbReference type="BMRB" id="Q5RBR3"/>
<dbReference type="SMR" id="Q5RBR3"/>
<dbReference type="FunCoup" id="Q5RBR3">
    <property type="interactions" value="3055"/>
</dbReference>
<dbReference type="STRING" id="9601.ENSPPYP00000021442"/>
<dbReference type="Ensembl" id="ENSPPYT00000022310.3">
    <property type="protein sequence ID" value="ENSPPYP00000021442.2"/>
    <property type="gene ID" value="ENSPPYG00000019137.3"/>
</dbReference>
<dbReference type="GeneID" id="100172361"/>
<dbReference type="KEGG" id="pon:100172361"/>
<dbReference type="CTD" id="51510"/>
<dbReference type="eggNOG" id="KOG1655">
    <property type="taxonomic scope" value="Eukaryota"/>
</dbReference>
<dbReference type="GeneTree" id="ENSGT00550000074817"/>
<dbReference type="HOGENOM" id="CLU_079409_1_0_1"/>
<dbReference type="InParanoid" id="Q5RBR3"/>
<dbReference type="OMA" id="GVKQMQK"/>
<dbReference type="OrthoDB" id="3973241at2759"/>
<dbReference type="TreeFam" id="TF300122"/>
<dbReference type="Proteomes" id="UP000001595">
    <property type="component" value="Chromosome 9"/>
</dbReference>
<dbReference type="GO" id="GO:1904930">
    <property type="term" value="C:amphisome membrane"/>
    <property type="evidence" value="ECO:0007669"/>
    <property type="project" value="Ensembl"/>
</dbReference>
<dbReference type="GO" id="GO:0005829">
    <property type="term" value="C:cytosol"/>
    <property type="evidence" value="ECO:0007669"/>
    <property type="project" value="UniProtKB-SubCell"/>
</dbReference>
<dbReference type="GO" id="GO:0000776">
    <property type="term" value="C:kinetochore"/>
    <property type="evidence" value="ECO:0007669"/>
    <property type="project" value="Ensembl"/>
</dbReference>
<dbReference type="GO" id="GO:0005828">
    <property type="term" value="C:kinetochore microtubule"/>
    <property type="evidence" value="ECO:0007669"/>
    <property type="project" value="Ensembl"/>
</dbReference>
<dbReference type="GO" id="GO:0005765">
    <property type="term" value="C:lysosomal membrane"/>
    <property type="evidence" value="ECO:0007669"/>
    <property type="project" value="Ensembl"/>
</dbReference>
<dbReference type="GO" id="GO:0030496">
    <property type="term" value="C:midbody"/>
    <property type="evidence" value="ECO:0007669"/>
    <property type="project" value="UniProtKB-SubCell"/>
</dbReference>
<dbReference type="GO" id="GO:0032585">
    <property type="term" value="C:multivesicular body membrane"/>
    <property type="evidence" value="ECO:0007669"/>
    <property type="project" value="Ensembl"/>
</dbReference>
<dbReference type="GO" id="GO:0005643">
    <property type="term" value="C:nuclear pore"/>
    <property type="evidence" value="ECO:0007669"/>
    <property type="project" value="Ensembl"/>
</dbReference>
<dbReference type="GO" id="GO:0005886">
    <property type="term" value="C:plasma membrane"/>
    <property type="evidence" value="ECO:0007669"/>
    <property type="project" value="Ensembl"/>
</dbReference>
<dbReference type="GO" id="GO:0097352">
    <property type="term" value="P:autophagosome maturation"/>
    <property type="evidence" value="ECO:0007669"/>
    <property type="project" value="Ensembl"/>
</dbReference>
<dbReference type="GO" id="GO:0071222">
    <property type="term" value="P:cellular response to lipopolysaccharide"/>
    <property type="evidence" value="ECO:0000250"/>
    <property type="project" value="UniProtKB"/>
</dbReference>
<dbReference type="GO" id="GO:0071225">
    <property type="term" value="P:cellular response to muramyl dipeptide"/>
    <property type="evidence" value="ECO:0000250"/>
    <property type="project" value="UniProtKB"/>
</dbReference>
<dbReference type="GO" id="GO:0008333">
    <property type="term" value="P:endosome to lysosome transport"/>
    <property type="evidence" value="ECO:0007669"/>
    <property type="project" value="Ensembl"/>
</dbReference>
<dbReference type="GO" id="GO:0030218">
    <property type="term" value="P:erythrocyte differentiation"/>
    <property type="evidence" value="ECO:0007669"/>
    <property type="project" value="Ensembl"/>
</dbReference>
<dbReference type="GO" id="GO:1902774">
    <property type="term" value="P:late endosome to lysosome transport"/>
    <property type="evidence" value="ECO:0007669"/>
    <property type="project" value="Ensembl"/>
</dbReference>
<dbReference type="GO" id="GO:0032511">
    <property type="term" value="P:late endosome to vacuole transport via multivesicular body sorting pathway"/>
    <property type="evidence" value="ECO:0007669"/>
    <property type="project" value="TreeGrafter"/>
</dbReference>
<dbReference type="GO" id="GO:0007040">
    <property type="term" value="P:lysosome organization"/>
    <property type="evidence" value="ECO:0007669"/>
    <property type="project" value="Ensembl"/>
</dbReference>
<dbReference type="GO" id="GO:0061952">
    <property type="term" value="P:midbody abscission"/>
    <property type="evidence" value="ECO:0007669"/>
    <property type="project" value="Ensembl"/>
</dbReference>
<dbReference type="GO" id="GO:0007080">
    <property type="term" value="P:mitotic metaphase chromosome alignment"/>
    <property type="evidence" value="ECO:0007669"/>
    <property type="project" value="Ensembl"/>
</dbReference>
<dbReference type="GO" id="GO:0031468">
    <property type="term" value="P:nuclear membrane reassembly"/>
    <property type="evidence" value="ECO:0007669"/>
    <property type="project" value="Ensembl"/>
</dbReference>
<dbReference type="GO" id="GO:0001778">
    <property type="term" value="P:plasma membrane repair"/>
    <property type="evidence" value="ECO:0007669"/>
    <property type="project" value="Ensembl"/>
</dbReference>
<dbReference type="GO" id="GO:0015031">
    <property type="term" value="P:protein transport"/>
    <property type="evidence" value="ECO:0007669"/>
    <property type="project" value="UniProtKB-KW"/>
</dbReference>
<dbReference type="GO" id="GO:0010824">
    <property type="term" value="P:regulation of centrosome duplication"/>
    <property type="evidence" value="ECO:0007669"/>
    <property type="project" value="Ensembl"/>
</dbReference>
<dbReference type="GO" id="GO:1901673">
    <property type="term" value="P:regulation of mitotic spindle assembly"/>
    <property type="evidence" value="ECO:0007669"/>
    <property type="project" value="Ensembl"/>
</dbReference>
<dbReference type="GO" id="GO:0001919">
    <property type="term" value="P:regulation of receptor recycling"/>
    <property type="evidence" value="ECO:0007669"/>
    <property type="project" value="Ensembl"/>
</dbReference>
<dbReference type="GO" id="GO:0043162">
    <property type="term" value="P:ubiquitin-dependent protein catabolic process via the multivesicular body sorting pathway"/>
    <property type="evidence" value="ECO:0007669"/>
    <property type="project" value="Ensembl"/>
</dbReference>
<dbReference type="GO" id="GO:0006900">
    <property type="term" value="P:vesicle budding from membrane"/>
    <property type="evidence" value="ECO:0007669"/>
    <property type="project" value="TreeGrafter"/>
</dbReference>
<dbReference type="GO" id="GO:0046761">
    <property type="term" value="P:viral budding from plasma membrane"/>
    <property type="evidence" value="ECO:0007669"/>
    <property type="project" value="Ensembl"/>
</dbReference>
<dbReference type="GO" id="GO:0039702">
    <property type="term" value="P:viral budding via host ESCRT complex"/>
    <property type="evidence" value="ECO:0007669"/>
    <property type="project" value="Ensembl"/>
</dbReference>
<dbReference type="Gene3D" id="6.10.140.1230">
    <property type="match status" value="1"/>
</dbReference>
<dbReference type="InterPro" id="IPR005024">
    <property type="entry name" value="Snf7_fam"/>
</dbReference>
<dbReference type="PANTHER" id="PTHR22761">
    <property type="entry name" value="CHARGED MULTIVESICULAR BODY PROTEIN"/>
    <property type="match status" value="1"/>
</dbReference>
<dbReference type="PANTHER" id="PTHR22761:SF12">
    <property type="entry name" value="CHARGED MULTIVESICULAR BODY PROTEIN 5"/>
    <property type="match status" value="1"/>
</dbReference>
<dbReference type="Pfam" id="PF03357">
    <property type="entry name" value="Snf7"/>
    <property type="match status" value="1"/>
</dbReference>
<organism>
    <name type="scientific">Pongo abelii</name>
    <name type="common">Sumatran orangutan</name>
    <name type="synonym">Pongo pygmaeus abelii</name>
    <dbReference type="NCBI Taxonomy" id="9601"/>
    <lineage>
        <taxon>Eukaryota</taxon>
        <taxon>Metazoa</taxon>
        <taxon>Chordata</taxon>
        <taxon>Craniata</taxon>
        <taxon>Vertebrata</taxon>
        <taxon>Euteleostomi</taxon>
        <taxon>Mammalia</taxon>
        <taxon>Eutheria</taxon>
        <taxon>Euarchontoglires</taxon>
        <taxon>Primates</taxon>
        <taxon>Haplorrhini</taxon>
        <taxon>Catarrhini</taxon>
        <taxon>Hominidae</taxon>
        <taxon>Pongo</taxon>
    </lineage>
</organism>
<name>CHMP5_PONAB</name>
<protein>
    <recommendedName>
        <fullName>Charged multivesicular body protein 5</fullName>
    </recommendedName>
    <alternativeName>
        <fullName>Chromatin-modifying protein 5</fullName>
    </alternativeName>
</protein>
<sequence>MNRLFGKAKPKAPPPSLTDCIGTVDSRAESIDKKISRLDAELVKYKDQIKKMREGPAKNMVKQKALRVLKQKRMYEQQRDNLAQQSFNMEQANYTIQSLKDTKTTVDAMKLGVKEMKKAYKQVKIDQIEDLQDQLEDMMEDANEIQEALSRSYGTPELDEDDLEAELDALGDELLADEDSSYLDEAASAPAIPEGVPTDTKNKDGVLVDEFGLPQIPAS</sequence>
<keyword id="KW-0175">Coiled coil</keyword>
<keyword id="KW-0963">Cytoplasm</keyword>
<keyword id="KW-0967">Endosome</keyword>
<keyword id="KW-0472">Membrane</keyword>
<keyword id="KW-0597">Phosphoprotein</keyword>
<keyword id="KW-0653">Protein transport</keyword>
<keyword id="KW-1185">Reference proteome</keyword>
<keyword id="KW-0813">Transport</keyword>
<keyword id="KW-0832">Ubl conjugation</keyword>
<gene>
    <name type="primary">CHMP5</name>
</gene>
<comment type="function">
    <text evidence="1">Probable peripherally associated component of the endosomal sorting required for transport complex III (ESCRT-III) which is involved in multivesicular bodies (MVBs) formation and sorting of endosomal cargo proteins into MVBs. MVBs contain intraluminal vesicles (ILVs) that are generated by invagination and scission from the limiting membrane of the endosome and mostly are delivered to lysosomes enabling degradation of membrane proteins, such as stimulated growth factor receptors, lysosomal enzymes and lipids. The MVB pathway appears to require the sequential function of ESCRT-O, -I,-II and -III complexes. ESCRT-III proteins mostly dissociate from the invaginating membrane before the ILV is released. The ESCRT machinery also functions in topologically equivalent membrane fission events, such as the terminal stages of cytokinesis and the budding of enveloped viruses (lentiviruses). ESCRT-III proteins are believed to mediate the necessary vesicle extrusion and/or membrane fission activities, possibly in conjunction with the AAA ATPase VPS4 (By similarity).</text>
</comment>
<comment type="subunit">
    <text evidence="1">Probable peripherally associated component of the endosomal sorting required for transport complex III (ESCRT-III). ESCRT-III components are thought to multimerize to form a flat lattice on the perimeter membrane of the endosome. Several assembly forms of ESCRT-III may exist that interact and act sequentially. Interacts with VTA1. Interacts with CHMP2A. Interacts with VTA1; the interaction involves soluble CHMP5 (By similarity). Interacts with NOD2 (By similarity). Interacts with BROX (By similarity).</text>
</comment>
<comment type="subcellular location">
    <subcellularLocation>
        <location evidence="1">Cytoplasm</location>
        <location evidence="1">Cytosol</location>
    </subcellularLocation>
    <subcellularLocation>
        <location evidence="4">Endosome membrane</location>
        <topology evidence="4">Peripheral membrane protein</topology>
    </subcellularLocation>
    <subcellularLocation>
        <location evidence="1">Midbody</location>
    </subcellularLocation>
    <text evidence="1">Localizes to the midbody of dividing cells. Localized in two distinct rings on either side of the Flemming body.</text>
</comment>
<comment type="PTM">
    <text evidence="1">ISGylated. Isgylation inhibits its interaction with VTA1 (By similarity).</text>
</comment>
<comment type="similarity">
    <text evidence="4">Belongs to the SNF7 family.</text>
</comment>